<comment type="similarity">
    <text evidence="2">To A.tumefaciens Ti plasmid conjugal transfer region I ORFR2 and ORFR3.</text>
</comment>
<sequence>MLDAALIKECADPSLKPAIVEQFVAAAGSTDPLAVSVESGGRLILVPKATSAGEAMAIVRQYVGQAVVRVGLTQFPVGVGVKNAADLQPDLVDACENLRKGTSMFAKVLRIVAKSYGNPESDDVIPQIFEDAVYAWKTGEFEGVSVFQAPDPGGSVATEEVLRSDDRDSHTQDSASEWPEGNDSVGSAAMRIDLSRIGGT</sequence>
<organism>
    <name type="scientific">Sinorhizobium fredii (strain NBRC 101917 / NGR234)</name>
    <dbReference type="NCBI Taxonomy" id="394"/>
    <lineage>
        <taxon>Bacteria</taxon>
        <taxon>Pseudomonadati</taxon>
        <taxon>Pseudomonadota</taxon>
        <taxon>Alphaproteobacteria</taxon>
        <taxon>Hyphomicrobiales</taxon>
        <taxon>Rhizobiaceae</taxon>
        <taxon>Sinorhizobium/Ensifer group</taxon>
        <taxon>Sinorhizobium</taxon>
    </lineage>
</organism>
<keyword id="KW-0614">Plasmid</keyword>
<keyword id="KW-1185">Reference proteome</keyword>
<proteinExistence type="predicted"/>
<protein>
    <recommendedName>
        <fullName>Uncharacterized protein y4dP</fullName>
    </recommendedName>
</protein>
<accession>P55415</accession>
<name>Y4DP_SINFN</name>
<geneLocation type="plasmid">
    <name>sym pNGR234a</name>
</geneLocation>
<dbReference type="EMBL" id="U00090">
    <property type="protein sequence ID" value="AAB91645.1"/>
    <property type="molecule type" value="Genomic_DNA"/>
</dbReference>
<dbReference type="RefSeq" id="NP_443825.1">
    <property type="nucleotide sequence ID" value="NC_000914.2"/>
</dbReference>
<dbReference type="RefSeq" id="WP_010875413.1">
    <property type="nucleotide sequence ID" value="NC_000914.2"/>
</dbReference>
<dbReference type="KEGG" id="rhi:NGR_a04010"/>
<dbReference type="PATRIC" id="fig|394.7.peg.422"/>
<dbReference type="eggNOG" id="ENOG5033Y9I">
    <property type="taxonomic scope" value="Bacteria"/>
</dbReference>
<dbReference type="HOGENOM" id="CLU_1363865_0_0_5"/>
<dbReference type="OrthoDB" id="8251053at2"/>
<dbReference type="Proteomes" id="UP000001054">
    <property type="component" value="Plasmid pNGR234a"/>
</dbReference>
<dbReference type="InterPro" id="IPR010680">
    <property type="entry name" value="TraH_2"/>
</dbReference>
<dbReference type="NCBIfam" id="NF010417">
    <property type="entry name" value="PRK13843.1"/>
    <property type="match status" value="1"/>
</dbReference>
<dbReference type="Pfam" id="PF06871">
    <property type="entry name" value="TraH_2"/>
    <property type="match status" value="1"/>
</dbReference>
<reference key="1">
    <citation type="journal article" date="1997" name="Nature">
        <title>Molecular basis of symbiosis between Rhizobium and legumes.</title>
        <authorList>
            <person name="Freiberg C.A."/>
            <person name="Fellay R."/>
            <person name="Bairoch A."/>
            <person name="Broughton W.J."/>
            <person name="Rosenthal A."/>
            <person name="Perret X."/>
        </authorList>
    </citation>
    <scope>NUCLEOTIDE SEQUENCE [LARGE SCALE GENOMIC DNA]</scope>
    <source>
        <strain>NBRC 101917 / NGR234</strain>
    </source>
</reference>
<reference key="2">
    <citation type="journal article" date="2009" name="Appl. Environ. Microbiol.">
        <title>Rhizobium sp. strain NGR234 possesses a remarkable number of secretion systems.</title>
        <authorList>
            <person name="Schmeisser C."/>
            <person name="Liesegang H."/>
            <person name="Krysciak D."/>
            <person name="Bakkou N."/>
            <person name="Le Quere A."/>
            <person name="Wollherr A."/>
            <person name="Heinemeyer I."/>
            <person name="Morgenstern B."/>
            <person name="Pommerening-Roeser A."/>
            <person name="Flores M."/>
            <person name="Palacios R."/>
            <person name="Brenner S."/>
            <person name="Gottschalk G."/>
            <person name="Schmitz R.A."/>
            <person name="Broughton W.J."/>
            <person name="Perret X."/>
            <person name="Strittmatter A.W."/>
            <person name="Streit W.R."/>
        </authorList>
    </citation>
    <scope>NUCLEOTIDE SEQUENCE [LARGE SCALE GENOMIC DNA]</scope>
    <source>
        <strain>NBRC 101917 / NGR234</strain>
    </source>
</reference>
<feature type="chain" id="PRO_0000200824" description="Uncharacterized protein y4dP">
    <location>
        <begin position="1"/>
        <end position="200"/>
    </location>
</feature>
<feature type="region of interest" description="Disordered" evidence="1">
    <location>
        <begin position="149"/>
        <end position="200"/>
    </location>
</feature>
<feature type="compositionally biased region" description="Basic and acidic residues" evidence="1">
    <location>
        <begin position="160"/>
        <end position="171"/>
    </location>
</feature>
<gene>
    <name type="ordered locus">NGR_a04010</name>
    <name type="ORF">y4dP</name>
</gene>
<evidence type="ECO:0000256" key="1">
    <source>
        <dbReference type="SAM" id="MobiDB-lite"/>
    </source>
</evidence>
<evidence type="ECO:0000305" key="2"/>